<proteinExistence type="inferred from homology"/>
<name>RSMJ_BUCAI</name>
<sequence length="246" mass="29240">MKIYLKFKSYNKRICKLLQLFKLEHDQNCSMGLLINHNSLELYNRDNVNQKPIKVDFTSKKNHYRCHHFRRKNEVLYRVSGIKNSYFPTILDATAGLGNDAFIFSFLGCKVIMIERHPIVAALLKDGLQRGYQDKKIGHWLQTRLHLIVNDSLKMLEIPILQPDVIYLDPMYPFHHKKSLPKKDMQFFRQLIGHNYDSKKLLEVSRKLAKNRIIVKRPYYAKPLSEDKVNHIVTTRNHRFDIYQPF</sequence>
<protein>
    <recommendedName>
        <fullName evidence="1">Ribosomal RNA small subunit methyltransferase J</fullName>
        <ecNumber evidence="1">2.1.1.242</ecNumber>
    </recommendedName>
    <alternativeName>
        <fullName evidence="1">16S rRNA m2G1516 methyltransferase</fullName>
    </alternativeName>
    <alternativeName>
        <fullName evidence="1">rRNA (guanine-N(2)-)-methyltransferase</fullName>
    </alternativeName>
</protein>
<evidence type="ECO:0000255" key="1">
    <source>
        <dbReference type="HAMAP-Rule" id="MF_01523"/>
    </source>
</evidence>
<comment type="function">
    <text evidence="1">Specifically methylates the guanosine in position 1516 of 16S rRNA.</text>
</comment>
<comment type="catalytic activity">
    <reaction evidence="1">
        <text>guanosine(1516) in 16S rRNA + S-adenosyl-L-methionine = N(2)-methylguanosine(1516) in 16S rRNA + S-adenosyl-L-homocysteine + H(+)</text>
        <dbReference type="Rhea" id="RHEA:43220"/>
        <dbReference type="Rhea" id="RHEA-COMP:10412"/>
        <dbReference type="Rhea" id="RHEA-COMP:10413"/>
        <dbReference type="ChEBI" id="CHEBI:15378"/>
        <dbReference type="ChEBI" id="CHEBI:57856"/>
        <dbReference type="ChEBI" id="CHEBI:59789"/>
        <dbReference type="ChEBI" id="CHEBI:74269"/>
        <dbReference type="ChEBI" id="CHEBI:74481"/>
        <dbReference type="EC" id="2.1.1.242"/>
    </reaction>
</comment>
<comment type="subcellular location">
    <subcellularLocation>
        <location evidence="1">Cytoplasm</location>
    </subcellularLocation>
</comment>
<comment type="similarity">
    <text evidence="1">Belongs to the methyltransferase superfamily. RsmJ family.</text>
</comment>
<keyword id="KW-0963">Cytoplasm</keyword>
<keyword id="KW-0489">Methyltransferase</keyword>
<keyword id="KW-1185">Reference proteome</keyword>
<keyword id="KW-0698">rRNA processing</keyword>
<keyword id="KW-0949">S-adenosyl-L-methionine</keyword>
<keyword id="KW-0808">Transferase</keyword>
<feature type="chain" id="PRO_0000212059" description="Ribosomal RNA small subunit methyltransferase J">
    <location>
        <begin position="1"/>
        <end position="246"/>
    </location>
</feature>
<feature type="binding site" evidence="1">
    <location>
        <begin position="115"/>
        <end position="116"/>
    </location>
    <ligand>
        <name>S-adenosyl-L-methionine</name>
        <dbReference type="ChEBI" id="CHEBI:59789"/>
    </ligand>
</feature>
<feature type="binding site" evidence="1">
    <location>
        <position position="169"/>
    </location>
    <ligand>
        <name>S-adenosyl-L-methionine</name>
        <dbReference type="ChEBI" id="CHEBI:59789"/>
    </ligand>
</feature>
<accession>P57646</accession>
<gene>
    <name evidence="1" type="primary">rsmJ</name>
    <name type="ordered locus">BU586</name>
</gene>
<organism>
    <name type="scientific">Buchnera aphidicola subsp. Acyrthosiphon pisum (strain APS)</name>
    <name type="common">Acyrthosiphon pisum symbiotic bacterium</name>
    <dbReference type="NCBI Taxonomy" id="107806"/>
    <lineage>
        <taxon>Bacteria</taxon>
        <taxon>Pseudomonadati</taxon>
        <taxon>Pseudomonadota</taxon>
        <taxon>Gammaproteobacteria</taxon>
        <taxon>Enterobacterales</taxon>
        <taxon>Erwiniaceae</taxon>
        <taxon>Buchnera</taxon>
    </lineage>
</organism>
<reference key="1">
    <citation type="journal article" date="2000" name="Nature">
        <title>Genome sequence of the endocellular bacterial symbiont of aphids Buchnera sp. APS.</title>
        <authorList>
            <person name="Shigenobu S."/>
            <person name="Watanabe H."/>
            <person name="Hattori M."/>
            <person name="Sakaki Y."/>
            <person name="Ishikawa H."/>
        </authorList>
    </citation>
    <scope>NUCLEOTIDE SEQUENCE [LARGE SCALE GENOMIC DNA]</scope>
    <source>
        <strain>APS</strain>
    </source>
</reference>
<dbReference type="EC" id="2.1.1.242" evidence="1"/>
<dbReference type="EMBL" id="BA000003">
    <property type="protein sequence ID" value="BAB13275.1"/>
    <property type="molecule type" value="Genomic_DNA"/>
</dbReference>
<dbReference type="RefSeq" id="NP_240389.1">
    <property type="nucleotide sequence ID" value="NC_002528.1"/>
</dbReference>
<dbReference type="RefSeq" id="WP_010896177.1">
    <property type="nucleotide sequence ID" value="NC_002528.1"/>
</dbReference>
<dbReference type="SMR" id="P57646"/>
<dbReference type="STRING" id="563178.BUAP5A_579"/>
<dbReference type="EnsemblBacteria" id="BAB13275">
    <property type="protein sequence ID" value="BAB13275"/>
    <property type="gene ID" value="BAB13275"/>
</dbReference>
<dbReference type="KEGG" id="buc:BU586"/>
<dbReference type="PATRIC" id="fig|107806.10.peg.591"/>
<dbReference type="eggNOG" id="COG0742">
    <property type="taxonomic scope" value="Bacteria"/>
</dbReference>
<dbReference type="HOGENOM" id="CLU_076324_0_0_6"/>
<dbReference type="Proteomes" id="UP000001806">
    <property type="component" value="Chromosome"/>
</dbReference>
<dbReference type="GO" id="GO:0005737">
    <property type="term" value="C:cytoplasm"/>
    <property type="evidence" value="ECO:0007669"/>
    <property type="project" value="UniProtKB-SubCell"/>
</dbReference>
<dbReference type="GO" id="GO:0008990">
    <property type="term" value="F:rRNA (guanine-N2-)-methyltransferase activity"/>
    <property type="evidence" value="ECO:0007669"/>
    <property type="project" value="UniProtKB-UniRule"/>
</dbReference>
<dbReference type="CDD" id="cd02440">
    <property type="entry name" value="AdoMet_MTases"/>
    <property type="match status" value="1"/>
</dbReference>
<dbReference type="Gene3D" id="3.40.50.150">
    <property type="entry name" value="Vaccinia Virus protein VP39"/>
    <property type="match status" value="1"/>
</dbReference>
<dbReference type="HAMAP" id="MF_01523">
    <property type="entry name" value="16SrRNA_methyltr_J"/>
    <property type="match status" value="1"/>
</dbReference>
<dbReference type="InterPro" id="IPR007536">
    <property type="entry name" value="16SrRNA_methylTrfase_J"/>
</dbReference>
<dbReference type="InterPro" id="IPR029063">
    <property type="entry name" value="SAM-dependent_MTases_sf"/>
</dbReference>
<dbReference type="PANTHER" id="PTHR36112">
    <property type="entry name" value="RIBOSOMAL RNA SMALL SUBUNIT METHYLTRANSFERASE J"/>
    <property type="match status" value="1"/>
</dbReference>
<dbReference type="PANTHER" id="PTHR36112:SF1">
    <property type="entry name" value="RIBOSOMAL RNA SMALL SUBUNIT METHYLTRANSFERASE J"/>
    <property type="match status" value="1"/>
</dbReference>
<dbReference type="Pfam" id="PF04445">
    <property type="entry name" value="SAM_MT"/>
    <property type="match status" value="1"/>
</dbReference>
<dbReference type="SUPFAM" id="SSF53335">
    <property type="entry name" value="S-adenosyl-L-methionine-dependent methyltransferases"/>
    <property type="match status" value="1"/>
</dbReference>